<keyword id="KW-0210">Decarboxylase</keyword>
<keyword id="KW-0456">Lyase</keyword>
<keyword id="KW-0665">Pyrimidine biosynthesis</keyword>
<keyword id="KW-1185">Reference proteome</keyword>
<reference key="1">
    <citation type="journal article" date="2006" name="Appl. Environ. Microbiol.">
        <title>Complete genome sequence of the marine, chemolithoautotrophic, ammonia-oxidizing bacterium Nitrosococcus oceani ATCC 19707.</title>
        <authorList>
            <person name="Klotz M.G."/>
            <person name="Arp D.J."/>
            <person name="Chain P.S.G."/>
            <person name="El-Sheikh A.F."/>
            <person name="Hauser L.J."/>
            <person name="Hommes N.G."/>
            <person name="Larimer F.W."/>
            <person name="Malfatti S.A."/>
            <person name="Norton J.M."/>
            <person name="Poret-Peterson A.T."/>
            <person name="Vergez L.M."/>
            <person name="Ward B.B."/>
        </authorList>
    </citation>
    <scope>NUCLEOTIDE SEQUENCE [LARGE SCALE GENOMIC DNA]</scope>
    <source>
        <strain>ATCC 19707 / BCRC 17464 / JCM 30415 / NCIMB 11848 / C-107</strain>
    </source>
</reference>
<dbReference type="EC" id="4.1.1.23" evidence="1"/>
<dbReference type="EMBL" id="CP000127">
    <property type="protein sequence ID" value="ABA58811.1"/>
    <property type="status" value="ALT_INIT"/>
    <property type="molecule type" value="Genomic_DNA"/>
</dbReference>
<dbReference type="RefSeq" id="WP_002810910.1">
    <property type="nucleotide sequence ID" value="NC_007484.1"/>
</dbReference>
<dbReference type="SMR" id="Q3J8N5"/>
<dbReference type="FunCoup" id="Q3J8N5">
    <property type="interactions" value="368"/>
</dbReference>
<dbReference type="STRING" id="323261.Noc_2353"/>
<dbReference type="KEGG" id="noc:Noc_2353"/>
<dbReference type="eggNOG" id="COG0284">
    <property type="taxonomic scope" value="Bacteria"/>
</dbReference>
<dbReference type="HOGENOM" id="CLU_067069_0_0_6"/>
<dbReference type="InParanoid" id="Q3J8N5"/>
<dbReference type="UniPathway" id="UPA00070">
    <property type="reaction ID" value="UER00120"/>
</dbReference>
<dbReference type="Proteomes" id="UP000006838">
    <property type="component" value="Chromosome"/>
</dbReference>
<dbReference type="GO" id="GO:0005829">
    <property type="term" value="C:cytosol"/>
    <property type="evidence" value="ECO:0007669"/>
    <property type="project" value="TreeGrafter"/>
</dbReference>
<dbReference type="GO" id="GO:0004590">
    <property type="term" value="F:orotidine-5'-phosphate decarboxylase activity"/>
    <property type="evidence" value="ECO:0007669"/>
    <property type="project" value="UniProtKB-UniRule"/>
</dbReference>
<dbReference type="GO" id="GO:0006207">
    <property type="term" value="P:'de novo' pyrimidine nucleobase biosynthetic process"/>
    <property type="evidence" value="ECO:0007669"/>
    <property type="project" value="InterPro"/>
</dbReference>
<dbReference type="GO" id="GO:0044205">
    <property type="term" value="P:'de novo' UMP biosynthetic process"/>
    <property type="evidence" value="ECO:0007669"/>
    <property type="project" value="UniProtKB-UniRule"/>
</dbReference>
<dbReference type="CDD" id="cd04725">
    <property type="entry name" value="OMP_decarboxylase_like"/>
    <property type="match status" value="1"/>
</dbReference>
<dbReference type="FunFam" id="3.20.20.70:FF:000015">
    <property type="entry name" value="Orotidine 5'-phosphate decarboxylase"/>
    <property type="match status" value="1"/>
</dbReference>
<dbReference type="Gene3D" id="3.20.20.70">
    <property type="entry name" value="Aldolase class I"/>
    <property type="match status" value="1"/>
</dbReference>
<dbReference type="HAMAP" id="MF_01200_B">
    <property type="entry name" value="OMPdecase_type1_B"/>
    <property type="match status" value="1"/>
</dbReference>
<dbReference type="InterPro" id="IPR013785">
    <property type="entry name" value="Aldolase_TIM"/>
</dbReference>
<dbReference type="InterPro" id="IPR014732">
    <property type="entry name" value="OMPdecase"/>
</dbReference>
<dbReference type="InterPro" id="IPR018089">
    <property type="entry name" value="OMPdecase_AS"/>
</dbReference>
<dbReference type="InterPro" id="IPR047596">
    <property type="entry name" value="OMPdecase_bac"/>
</dbReference>
<dbReference type="InterPro" id="IPR001754">
    <property type="entry name" value="OMPdeCOase_dom"/>
</dbReference>
<dbReference type="InterPro" id="IPR011060">
    <property type="entry name" value="RibuloseP-bd_barrel"/>
</dbReference>
<dbReference type="NCBIfam" id="NF001273">
    <property type="entry name" value="PRK00230.1"/>
    <property type="match status" value="1"/>
</dbReference>
<dbReference type="NCBIfam" id="NF010386">
    <property type="entry name" value="PRK13813.1"/>
    <property type="match status" value="1"/>
</dbReference>
<dbReference type="NCBIfam" id="TIGR01740">
    <property type="entry name" value="pyrF"/>
    <property type="match status" value="1"/>
</dbReference>
<dbReference type="PANTHER" id="PTHR32119">
    <property type="entry name" value="OROTIDINE 5'-PHOSPHATE DECARBOXYLASE"/>
    <property type="match status" value="1"/>
</dbReference>
<dbReference type="PANTHER" id="PTHR32119:SF2">
    <property type="entry name" value="OROTIDINE 5'-PHOSPHATE DECARBOXYLASE"/>
    <property type="match status" value="1"/>
</dbReference>
<dbReference type="Pfam" id="PF00215">
    <property type="entry name" value="OMPdecase"/>
    <property type="match status" value="1"/>
</dbReference>
<dbReference type="SMART" id="SM00934">
    <property type="entry name" value="OMPdecase"/>
    <property type="match status" value="1"/>
</dbReference>
<dbReference type="SUPFAM" id="SSF51366">
    <property type="entry name" value="Ribulose-phoshate binding barrel"/>
    <property type="match status" value="1"/>
</dbReference>
<dbReference type="PROSITE" id="PS00156">
    <property type="entry name" value="OMPDECASE"/>
    <property type="match status" value="1"/>
</dbReference>
<protein>
    <recommendedName>
        <fullName evidence="1">Orotidine 5'-phosphate decarboxylase</fullName>
        <ecNumber evidence="1">4.1.1.23</ecNumber>
    </recommendedName>
    <alternativeName>
        <fullName evidence="1">OMP decarboxylase</fullName>
        <shortName evidence="1">OMPDCase</shortName>
        <shortName evidence="1">OMPdecase</shortName>
    </alternativeName>
</protein>
<gene>
    <name evidence="1" type="primary">pyrF</name>
    <name type="ordered locus">Noc_2353</name>
</gene>
<proteinExistence type="inferred from homology"/>
<evidence type="ECO:0000255" key="1">
    <source>
        <dbReference type="HAMAP-Rule" id="MF_01200"/>
    </source>
</evidence>
<evidence type="ECO:0000305" key="2"/>
<comment type="function">
    <text evidence="1">Catalyzes the decarboxylation of orotidine 5'-monophosphate (OMP) to uridine 5'-monophosphate (UMP).</text>
</comment>
<comment type="catalytic activity">
    <reaction evidence="1">
        <text>orotidine 5'-phosphate + H(+) = UMP + CO2</text>
        <dbReference type="Rhea" id="RHEA:11596"/>
        <dbReference type="ChEBI" id="CHEBI:15378"/>
        <dbReference type="ChEBI" id="CHEBI:16526"/>
        <dbReference type="ChEBI" id="CHEBI:57538"/>
        <dbReference type="ChEBI" id="CHEBI:57865"/>
        <dbReference type="EC" id="4.1.1.23"/>
    </reaction>
</comment>
<comment type="pathway">
    <text evidence="1">Pyrimidine metabolism; UMP biosynthesis via de novo pathway; UMP from orotate: step 2/2.</text>
</comment>
<comment type="subunit">
    <text evidence="1">Homodimer.</text>
</comment>
<comment type="similarity">
    <text evidence="1">Belongs to the OMP decarboxylase family. Type 1 subfamily.</text>
</comment>
<comment type="sequence caution" evidence="2">
    <conflict type="erroneous initiation">
        <sequence resource="EMBL-CDS" id="ABA58811"/>
    </conflict>
</comment>
<organism>
    <name type="scientific">Nitrosococcus oceani (strain ATCC 19707 / BCRC 17464 / JCM 30415 / NCIMB 11848 / C-107)</name>
    <dbReference type="NCBI Taxonomy" id="323261"/>
    <lineage>
        <taxon>Bacteria</taxon>
        <taxon>Pseudomonadati</taxon>
        <taxon>Pseudomonadota</taxon>
        <taxon>Gammaproteobacteria</taxon>
        <taxon>Chromatiales</taxon>
        <taxon>Chromatiaceae</taxon>
        <taxon>Nitrosococcus</taxon>
    </lineage>
</organism>
<name>PYRF_NITOC</name>
<sequence length="232" mass="24743">MEKSRIIIALDYPNEEQALSLVRQLDPAQCRLKVGKELFTRAGPSLVKRLAAQGFPIFLDLKFHDIPHTVARACLAAADLGVWMLNIHALGGLSMMKAAQEALANHPSHPQLIAVTVLTSMDQAALSQIGLAGTPEDNVLQLALLTQEAGLDGIVCSGQEAPALRQTLGKEFLLVTPGIRPAGAAPKDQQRVLTPREALAKGANYLVIGRPITAAPDPMMALRAIEAEISNV</sequence>
<feature type="chain" id="PRO_0000241880" description="Orotidine 5'-phosphate decarboxylase">
    <location>
        <begin position="1"/>
        <end position="232"/>
    </location>
</feature>
<feature type="active site" description="Proton donor" evidence="1">
    <location>
        <position position="62"/>
    </location>
</feature>
<feature type="binding site" evidence="1">
    <location>
        <position position="11"/>
    </location>
    <ligand>
        <name>substrate</name>
    </ligand>
</feature>
<feature type="binding site" evidence="1">
    <location>
        <position position="33"/>
    </location>
    <ligand>
        <name>substrate</name>
    </ligand>
</feature>
<feature type="binding site" evidence="1">
    <location>
        <begin position="60"/>
        <end position="69"/>
    </location>
    <ligand>
        <name>substrate</name>
    </ligand>
</feature>
<feature type="binding site" evidence="1">
    <location>
        <position position="119"/>
    </location>
    <ligand>
        <name>substrate</name>
    </ligand>
</feature>
<feature type="binding site" evidence="1">
    <location>
        <position position="180"/>
    </location>
    <ligand>
        <name>substrate</name>
    </ligand>
</feature>
<feature type="binding site" evidence="1">
    <location>
        <position position="189"/>
    </location>
    <ligand>
        <name>substrate</name>
    </ligand>
</feature>
<feature type="binding site" evidence="1">
    <location>
        <position position="209"/>
    </location>
    <ligand>
        <name>substrate</name>
    </ligand>
</feature>
<feature type="binding site" evidence="1">
    <location>
        <position position="210"/>
    </location>
    <ligand>
        <name>substrate</name>
    </ligand>
</feature>
<accession>Q3J8N5</accession>